<proteinExistence type="inferred from homology"/>
<feature type="chain" id="PRO_1000119363" description="Bifunctional uridylyltransferase/uridylyl-removing enzyme">
    <location>
        <begin position="1"/>
        <end position="890"/>
    </location>
</feature>
<feature type="domain" description="HD" evidence="2">
    <location>
        <begin position="468"/>
        <end position="590"/>
    </location>
</feature>
<feature type="domain" description="ACT 1" evidence="1">
    <location>
        <begin position="709"/>
        <end position="789"/>
    </location>
</feature>
<feature type="domain" description="ACT 2" evidence="1">
    <location>
        <begin position="816"/>
        <end position="890"/>
    </location>
</feature>
<feature type="region of interest" description="Uridylyltransferase">
    <location>
        <begin position="1"/>
        <end position="349"/>
    </location>
</feature>
<feature type="region of interest" description="Uridylyl-removing">
    <location>
        <begin position="350"/>
        <end position="708"/>
    </location>
</feature>
<accession>B7NIC8</accession>
<protein>
    <recommendedName>
        <fullName evidence="1">Bifunctional uridylyltransferase/uridylyl-removing enzyme</fullName>
        <shortName evidence="1">UTase/UR</shortName>
    </recommendedName>
    <alternativeName>
        <fullName evidence="1">Bifunctional [protein-PII] modification enzyme</fullName>
    </alternativeName>
    <alternativeName>
        <fullName evidence="1">Bifunctional nitrogen sensor protein</fullName>
    </alternativeName>
    <domain>
        <recommendedName>
            <fullName evidence="1">[Protein-PII] uridylyltransferase</fullName>
            <shortName evidence="1">PII uridylyltransferase</shortName>
            <shortName evidence="1">UTase</shortName>
            <ecNumber evidence="1">2.7.7.59</ecNumber>
        </recommendedName>
    </domain>
    <domain>
        <recommendedName>
            <fullName evidence="1">[Protein-PII]-UMP uridylyl-removing enzyme</fullName>
            <shortName evidence="1">UR</shortName>
            <ecNumber evidence="1">3.1.4.-</ecNumber>
        </recommendedName>
    </domain>
</protein>
<name>GLND_ECO7I</name>
<gene>
    <name evidence="1" type="primary">glnD</name>
    <name type="ordered locus">ECIAI39_0169</name>
</gene>
<sequence length="890" mass="102373">MNTLPEQYANTALPTLPGQPQNPCAWPRDELTVCGIKAHIDTFQRWLGDAFDNGISAEELIEARTEFIDQLLQRLWIEAGFSQIADLALVAVGGYGRGELHPLSDVDLLILSRKKLPDDQAQKVGELLTLLWDVKLEVGHSVRTLEECMLEGLSDLTVATNLIESRLLIGDVALFLELQKHIFSEGFWPSDKFYAAKVEEQNQRHQRYHGTSYNLEPDIKSSPGGLRDIHTLQWVARRHFGATSLDEMVGFGFLTSAERAELNECLHILWRIRFALHLVVSRYDNRLLFDRQLSVAQRLNYSGEGNEPVERMMKDYFRVTRRVSELNQMLLQLFDEAILALPADEKPRPIDDEFQLRGTLIDLRDETLFMRQPEAILRMFYTMVRNSAITGIYSTTLRQLRHARRHLQQPLCNIPEARKLFLSILRHPGAVRRGLLPMHRHSVLGAYMPQWSHIVGQMQFDLFHAYTVDEHTIRVMLKLESFASEETRQRHPLCVDVWPRLPSTELIFIAALFHDIAKGRGGDHSILGAQDVVHFAELHGLNSRETQLVAWLVRQHLLMSVTAQRRDIQDPEVIKQFAEEVQTENRLRYLVCLTVADICATNETLWNSWKQSLLRELYFATEKQLRRGMQNTPDMRERVRHHQLQALALLRMDNIDEEALHQIWSRCRANYFVRHSPNQLAWHARHLLQHDLSKPLVLLSPQATRGGTEIFIWSPDRPYLFAAVCAELDRRNLSVHDAQIFTTRDGMAMDTFIVLEPDGSPLSADRHEVIQFGLEQVLTQSSWQPPQPRRQPAKLRHFTVETEVTFLPTHTDRKSFLELIALDQPGLLARVGKIFADLGISLHGARITTIGERVEDLFIIATADRRALNNELQQEVHQRLTEALNPNDKG</sequence>
<reference key="1">
    <citation type="journal article" date="2009" name="PLoS Genet.">
        <title>Organised genome dynamics in the Escherichia coli species results in highly diverse adaptive paths.</title>
        <authorList>
            <person name="Touchon M."/>
            <person name="Hoede C."/>
            <person name="Tenaillon O."/>
            <person name="Barbe V."/>
            <person name="Baeriswyl S."/>
            <person name="Bidet P."/>
            <person name="Bingen E."/>
            <person name="Bonacorsi S."/>
            <person name="Bouchier C."/>
            <person name="Bouvet O."/>
            <person name="Calteau A."/>
            <person name="Chiapello H."/>
            <person name="Clermont O."/>
            <person name="Cruveiller S."/>
            <person name="Danchin A."/>
            <person name="Diard M."/>
            <person name="Dossat C."/>
            <person name="Karoui M.E."/>
            <person name="Frapy E."/>
            <person name="Garry L."/>
            <person name="Ghigo J.M."/>
            <person name="Gilles A.M."/>
            <person name="Johnson J."/>
            <person name="Le Bouguenec C."/>
            <person name="Lescat M."/>
            <person name="Mangenot S."/>
            <person name="Martinez-Jehanne V."/>
            <person name="Matic I."/>
            <person name="Nassif X."/>
            <person name="Oztas S."/>
            <person name="Petit M.A."/>
            <person name="Pichon C."/>
            <person name="Rouy Z."/>
            <person name="Ruf C.S."/>
            <person name="Schneider D."/>
            <person name="Tourret J."/>
            <person name="Vacherie B."/>
            <person name="Vallenet D."/>
            <person name="Medigue C."/>
            <person name="Rocha E.P.C."/>
            <person name="Denamur E."/>
        </authorList>
    </citation>
    <scope>NUCLEOTIDE SEQUENCE [LARGE SCALE GENOMIC DNA]</scope>
    <source>
        <strain>IAI39 / ExPEC</strain>
    </source>
</reference>
<evidence type="ECO:0000255" key="1">
    <source>
        <dbReference type="HAMAP-Rule" id="MF_00277"/>
    </source>
</evidence>
<evidence type="ECO:0000255" key="2">
    <source>
        <dbReference type="PROSITE-ProRule" id="PRU01175"/>
    </source>
</evidence>
<keyword id="KW-0378">Hydrolase</keyword>
<keyword id="KW-0460">Magnesium</keyword>
<keyword id="KW-0511">Multifunctional enzyme</keyword>
<keyword id="KW-0548">Nucleotidyltransferase</keyword>
<keyword id="KW-0677">Repeat</keyword>
<keyword id="KW-0808">Transferase</keyword>
<organism>
    <name type="scientific">Escherichia coli O7:K1 (strain IAI39 / ExPEC)</name>
    <dbReference type="NCBI Taxonomy" id="585057"/>
    <lineage>
        <taxon>Bacteria</taxon>
        <taxon>Pseudomonadati</taxon>
        <taxon>Pseudomonadota</taxon>
        <taxon>Gammaproteobacteria</taxon>
        <taxon>Enterobacterales</taxon>
        <taxon>Enterobacteriaceae</taxon>
        <taxon>Escherichia</taxon>
    </lineage>
</organism>
<comment type="function">
    <text evidence="1">Modifies, by uridylylation and deuridylylation, the PII regulatory proteins (GlnB and homologs), in response to the nitrogen status of the cell that GlnD senses through the glutamine level. Under low glutamine levels, catalyzes the conversion of the PII proteins and UTP to PII-UMP and PPi, while under higher glutamine levels, GlnD hydrolyzes PII-UMP to PII and UMP (deuridylylation). Thus, controls uridylylation state and activity of the PII proteins, and plays an important role in the regulation of nitrogen assimilation and metabolism.</text>
</comment>
<comment type="catalytic activity">
    <reaction evidence="1">
        <text>[protein-PII]-L-tyrosine + UTP = [protein-PII]-uridylyl-L-tyrosine + diphosphate</text>
        <dbReference type="Rhea" id="RHEA:13673"/>
        <dbReference type="Rhea" id="RHEA-COMP:12147"/>
        <dbReference type="Rhea" id="RHEA-COMP:12148"/>
        <dbReference type="ChEBI" id="CHEBI:33019"/>
        <dbReference type="ChEBI" id="CHEBI:46398"/>
        <dbReference type="ChEBI" id="CHEBI:46858"/>
        <dbReference type="ChEBI" id="CHEBI:90602"/>
        <dbReference type="EC" id="2.7.7.59"/>
    </reaction>
</comment>
<comment type="catalytic activity">
    <reaction evidence="1">
        <text>[protein-PII]-uridylyl-L-tyrosine + H2O = [protein-PII]-L-tyrosine + UMP + H(+)</text>
        <dbReference type="Rhea" id="RHEA:48600"/>
        <dbReference type="Rhea" id="RHEA-COMP:12147"/>
        <dbReference type="Rhea" id="RHEA-COMP:12148"/>
        <dbReference type="ChEBI" id="CHEBI:15377"/>
        <dbReference type="ChEBI" id="CHEBI:15378"/>
        <dbReference type="ChEBI" id="CHEBI:46858"/>
        <dbReference type="ChEBI" id="CHEBI:57865"/>
        <dbReference type="ChEBI" id="CHEBI:90602"/>
    </reaction>
</comment>
<comment type="cofactor">
    <cofactor evidence="1">
        <name>Mg(2+)</name>
        <dbReference type="ChEBI" id="CHEBI:18420"/>
    </cofactor>
</comment>
<comment type="activity regulation">
    <text evidence="1">Uridylyltransferase (UTase) activity is inhibited by glutamine, while glutamine activates uridylyl-removing (UR) activity.</text>
</comment>
<comment type="domain">
    <text evidence="1">Has four distinct domains: an N-terminal nucleotidyltransferase (NT) domain responsible for UTase activity, a central HD domain that encodes UR activity, and two C-terminal ACT domains that seem to have a role in glutamine sensing.</text>
</comment>
<comment type="similarity">
    <text evidence="1">Belongs to the GlnD family.</text>
</comment>
<dbReference type="EC" id="2.7.7.59" evidence="1"/>
<dbReference type="EC" id="3.1.4.-" evidence="1"/>
<dbReference type="EMBL" id="CU928164">
    <property type="protein sequence ID" value="CAR16309.1"/>
    <property type="molecule type" value="Genomic_DNA"/>
</dbReference>
<dbReference type="RefSeq" id="WP_001094541.1">
    <property type="nucleotide sequence ID" value="NC_011750.1"/>
</dbReference>
<dbReference type="RefSeq" id="YP_002406215.1">
    <property type="nucleotide sequence ID" value="NC_011750.1"/>
</dbReference>
<dbReference type="SMR" id="B7NIC8"/>
<dbReference type="STRING" id="585057.ECIAI39_0169"/>
<dbReference type="KEGG" id="ect:ECIAI39_0169"/>
<dbReference type="PATRIC" id="fig|585057.6.peg.182"/>
<dbReference type="HOGENOM" id="CLU_012833_0_0_6"/>
<dbReference type="Proteomes" id="UP000000749">
    <property type="component" value="Chromosome"/>
</dbReference>
<dbReference type="GO" id="GO:0008773">
    <property type="term" value="F:[protein-PII] uridylyltransferase activity"/>
    <property type="evidence" value="ECO:0007669"/>
    <property type="project" value="UniProtKB-UniRule"/>
</dbReference>
<dbReference type="GO" id="GO:0008081">
    <property type="term" value="F:phosphoric diester hydrolase activity"/>
    <property type="evidence" value="ECO:0007669"/>
    <property type="project" value="UniProtKB-UniRule"/>
</dbReference>
<dbReference type="GO" id="GO:0006808">
    <property type="term" value="P:regulation of nitrogen utilization"/>
    <property type="evidence" value="ECO:0007669"/>
    <property type="project" value="UniProtKB-UniRule"/>
</dbReference>
<dbReference type="CDD" id="cd04899">
    <property type="entry name" value="ACT_ACR-UUR-like_2"/>
    <property type="match status" value="1"/>
</dbReference>
<dbReference type="CDD" id="cd04900">
    <property type="entry name" value="ACT_UUR-like_1"/>
    <property type="match status" value="1"/>
</dbReference>
<dbReference type="CDD" id="cd00077">
    <property type="entry name" value="HDc"/>
    <property type="match status" value="1"/>
</dbReference>
<dbReference type="CDD" id="cd05401">
    <property type="entry name" value="NT_GlnE_GlnD_like"/>
    <property type="match status" value="1"/>
</dbReference>
<dbReference type="FunFam" id="1.10.3210.10:FF:000005">
    <property type="entry name" value="Bifunctional uridylyltransferase/uridylyl-removing enzyme"/>
    <property type="match status" value="1"/>
</dbReference>
<dbReference type="Gene3D" id="1.10.3210.10">
    <property type="entry name" value="Hypothetical protein af1432"/>
    <property type="match status" value="1"/>
</dbReference>
<dbReference type="HAMAP" id="MF_00277">
    <property type="entry name" value="PII_uridylyl_transf"/>
    <property type="match status" value="1"/>
</dbReference>
<dbReference type="InterPro" id="IPR045865">
    <property type="entry name" value="ACT-like_dom_sf"/>
</dbReference>
<dbReference type="InterPro" id="IPR002912">
    <property type="entry name" value="ACT_dom"/>
</dbReference>
<dbReference type="InterPro" id="IPR003607">
    <property type="entry name" value="HD/PDEase_dom"/>
</dbReference>
<dbReference type="InterPro" id="IPR006674">
    <property type="entry name" value="HD_domain"/>
</dbReference>
<dbReference type="InterPro" id="IPR043519">
    <property type="entry name" value="NT_sf"/>
</dbReference>
<dbReference type="InterPro" id="IPR013546">
    <property type="entry name" value="PII_UdlTrfase/GS_AdlTrfase"/>
</dbReference>
<dbReference type="InterPro" id="IPR002934">
    <property type="entry name" value="Polymerase_NTP_transf_dom"/>
</dbReference>
<dbReference type="InterPro" id="IPR010043">
    <property type="entry name" value="UTase/UR"/>
</dbReference>
<dbReference type="NCBIfam" id="NF002487">
    <property type="entry name" value="PRK01759.1"/>
    <property type="match status" value="1"/>
</dbReference>
<dbReference type="NCBIfam" id="NF003448">
    <property type="entry name" value="PRK05007.1"/>
    <property type="match status" value="1"/>
</dbReference>
<dbReference type="NCBIfam" id="TIGR01693">
    <property type="entry name" value="UTase_glnD"/>
    <property type="match status" value="1"/>
</dbReference>
<dbReference type="PANTHER" id="PTHR47320">
    <property type="entry name" value="BIFUNCTIONAL URIDYLYLTRANSFERASE/URIDYLYL-REMOVING ENZYME"/>
    <property type="match status" value="1"/>
</dbReference>
<dbReference type="PANTHER" id="PTHR47320:SF1">
    <property type="entry name" value="BIFUNCTIONAL URIDYLYLTRANSFERASE_URIDYLYL-REMOVING ENZYME"/>
    <property type="match status" value="1"/>
</dbReference>
<dbReference type="Pfam" id="PF01842">
    <property type="entry name" value="ACT"/>
    <property type="match status" value="2"/>
</dbReference>
<dbReference type="Pfam" id="PF08335">
    <property type="entry name" value="GlnD_UR_UTase"/>
    <property type="match status" value="1"/>
</dbReference>
<dbReference type="Pfam" id="PF01966">
    <property type="entry name" value="HD"/>
    <property type="match status" value="1"/>
</dbReference>
<dbReference type="Pfam" id="PF01909">
    <property type="entry name" value="NTP_transf_2"/>
    <property type="match status" value="1"/>
</dbReference>
<dbReference type="PIRSF" id="PIRSF006288">
    <property type="entry name" value="PII_uridyltransf"/>
    <property type="match status" value="1"/>
</dbReference>
<dbReference type="SMART" id="SM00471">
    <property type="entry name" value="HDc"/>
    <property type="match status" value="1"/>
</dbReference>
<dbReference type="SUPFAM" id="SSF55021">
    <property type="entry name" value="ACT-like"/>
    <property type="match status" value="2"/>
</dbReference>
<dbReference type="SUPFAM" id="SSF109604">
    <property type="entry name" value="HD-domain/PDEase-like"/>
    <property type="match status" value="1"/>
</dbReference>
<dbReference type="SUPFAM" id="SSF81301">
    <property type="entry name" value="Nucleotidyltransferase"/>
    <property type="match status" value="1"/>
</dbReference>
<dbReference type="SUPFAM" id="SSF81593">
    <property type="entry name" value="Nucleotidyltransferase substrate binding subunit/domain"/>
    <property type="match status" value="1"/>
</dbReference>
<dbReference type="PROSITE" id="PS51671">
    <property type="entry name" value="ACT"/>
    <property type="match status" value="2"/>
</dbReference>
<dbReference type="PROSITE" id="PS51831">
    <property type="entry name" value="HD"/>
    <property type="match status" value="1"/>
</dbReference>